<proteinExistence type="inferred from homology"/>
<dbReference type="EC" id="4.1.1.11" evidence="1"/>
<dbReference type="EMBL" id="AM933172">
    <property type="protein sequence ID" value="CAR31773.1"/>
    <property type="molecule type" value="Genomic_DNA"/>
</dbReference>
<dbReference type="RefSeq" id="WP_000621526.1">
    <property type="nucleotide sequence ID" value="NC_011294.1"/>
</dbReference>
<dbReference type="SMR" id="B5R3E4"/>
<dbReference type="GeneID" id="89550440"/>
<dbReference type="KEGG" id="set:SEN0185"/>
<dbReference type="HOGENOM" id="CLU_115305_2_1_6"/>
<dbReference type="UniPathway" id="UPA00028">
    <property type="reaction ID" value="UER00002"/>
</dbReference>
<dbReference type="Proteomes" id="UP000000613">
    <property type="component" value="Chromosome"/>
</dbReference>
<dbReference type="GO" id="GO:0005829">
    <property type="term" value="C:cytosol"/>
    <property type="evidence" value="ECO:0007669"/>
    <property type="project" value="TreeGrafter"/>
</dbReference>
<dbReference type="GO" id="GO:0004068">
    <property type="term" value="F:aspartate 1-decarboxylase activity"/>
    <property type="evidence" value="ECO:0007669"/>
    <property type="project" value="UniProtKB-UniRule"/>
</dbReference>
<dbReference type="GO" id="GO:0006523">
    <property type="term" value="P:alanine biosynthetic process"/>
    <property type="evidence" value="ECO:0007669"/>
    <property type="project" value="InterPro"/>
</dbReference>
<dbReference type="GO" id="GO:0015940">
    <property type="term" value="P:pantothenate biosynthetic process"/>
    <property type="evidence" value="ECO:0007669"/>
    <property type="project" value="UniProtKB-UniRule"/>
</dbReference>
<dbReference type="CDD" id="cd06919">
    <property type="entry name" value="Asp_decarbox"/>
    <property type="match status" value="1"/>
</dbReference>
<dbReference type="FunFam" id="2.40.40.20:FF:000004">
    <property type="entry name" value="Aspartate 1-decarboxylase"/>
    <property type="match status" value="1"/>
</dbReference>
<dbReference type="Gene3D" id="2.40.40.20">
    <property type="match status" value="1"/>
</dbReference>
<dbReference type="HAMAP" id="MF_00446">
    <property type="entry name" value="PanD"/>
    <property type="match status" value="1"/>
</dbReference>
<dbReference type="InterPro" id="IPR009010">
    <property type="entry name" value="Asp_de-COase-like_dom_sf"/>
</dbReference>
<dbReference type="InterPro" id="IPR003190">
    <property type="entry name" value="Asp_decarbox"/>
</dbReference>
<dbReference type="NCBIfam" id="TIGR00223">
    <property type="entry name" value="panD"/>
    <property type="match status" value="1"/>
</dbReference>
<dbReference type="PANTHER" id="PTHR21012">
    <property type="entry name" value="ASPARTATE 1-DECARBOXYLASE"/>
    <property type="match status" value="1"/>
</dbReference>
<dbReference type="PANTHER" id="PTHR21012:SF0">
    <property type="entry name" value="ASPARTATE 1-DECARBOXYLASE"/>
    <property type="match status" value="1"/>
</dbReference>
<dbReference type="Pfam" id="PF02261">
    <property type="entry name" value="Asp_decarbox"/>
    <property type="match status" value="1"/>
</dbReference>
<dbReference type="PIRSF" id="PIRSF006246">
    <property type="entry name" value="Asp_decarbox"/>
    <property type="match status" value="1"/>
</dbReference>
<dbReference type="SUPFAM" id="SSF50692">
    <property type="entry name" value="ADC-like"/>
    <property type="match status" value="1"/>
</dbReference>
<protein>
    <recommendedName>
        <fullName evidence="1">Aspartate 1-decarboxylase</fullName>
        <ecNumber evidence="1">4.1.1.11</ecNumber>
    </recommendedName>
    <alternativeName>
        <fullName evidence="1">Aspartate alpha-decarboxylase</fullName>
    </alternativeName>
    <component>
        <recommendedName>
            <fullName evidence="1">Aspartate 1-decarboxylase beta chain</fullName>
        </recommendedName>
    </component>
    <component>
        <recommendedName>
            <fullName evidence="1">Aspartate 1-decarboxylase alpha chain</fullName>
        </recommendedName>
    </component>
</protein>
<sequence length="126" mass="13887">MIRTMLQGKLHRVKVTQADLHYEGSCAIDQDFLDASGILENEAIDIWNVTNGKRFSTYAIAAERGSRIISVNGAAAHCAEVGDIVIIASFVTMSDEEARTWRPKVAYFEGDNEMKRTAKAIPVQVA</sequence>
<name>PAND_SALEP</name>
<keyword id="KW-0068">Autocatalytic cleavage</keyword>
<keyword id="KW-0963">Cytoplasm</keyword>
<keyword id="KW-0210">Decarboxylase</keyword>
<keyword id="KW-0456">Lyase</keyword>
<keyword id="KW-0566">Pantothenate biosynthesis</keyword>
<keyword id="KW-0670">Pyruvate</keyword>
<keyword id="KW-0704">Schiff base</keyword>
<keyword id="KW-0865">Zymogen</keyword>
<comment type="function">
    <text evidence="1">Catalyzes the pyruvoyl-dependent decarboxylation of aspartate to produce beta-alanine.</text>
</comment>
<comment type="catalytic activity">
    <reaction evidence="1">
        <text>L-aspartate + H(+) = beta-alanine + CO2</text>
        <dbReference type="Rhea" id="RHEA:19497"/>
        <dbReference type="ChEBI" id="CHEBI:15378"/>
        <dbReference type="ChEBI" id="CHEBI:16526"/>
        <dbReference type="ChEBI" id="CHEBI:29991"/>
        <dbReference type="ChEBI" id="CHEBI:57966"/>
        <dbReference type="EC" id="4.1.1.11"/>
    </reaction>
</comment>
<comment type="cofactor">
    <cofactor evidence="1">
        <name>pyruvate</name>
        <dbReference type="ChEBI" id="CHEBI:15361"/>
    </cofactor>
    <text evidence="1">Binds 1 pyruvoyl group covalently per subunit.</text>
</comment>
<comment type="pathway">
    <text evidence="1">Cofactor biosynthesis; (R)-pantothenate biosynthesis; beta-alanine from L-aspartate: step 1/1.</text>
</comment>
<comment type="subunit">
    <text evidence="1">Heterooctamer of four alpha and four beta subunits.</text>
</comment>
<comment type="subcellular location">
    <subcellularLocation>
        <location evidence="1">Cytoplasm</location>
    </subcellularLocation>
</comment>
<comment type="PTM">
    <text evidence="1">Is synthesized initially as an inactive proenzyme, which is activated by self-cleavage at a specific serine bond to produce a beta-subunit with a hydroxyl group at its C-terminus and an alpha-subunit with a pyruvoyl group at its N-terminus.</text>
</comment>
<comment type="similarity">
    <text evidence="1">Belongs to the PanD family.</text>
</comment>
<gene>
    <name evidence="1" type="primary">panD</name>
    <name type="ordered locus">SEN0185</name>
</gene>
<reference key="1">
    <citation type="journal article" date="2008" name="Genome Res.">
        <title>Comparative genome analysis of Salmonella enteritidis PT4 and Salmonella gallinarum 287/91 provides insights into evolutionary and host adaptation pathways.</title>
        <authorList>
            <person name="Thomson N.R."/>
            <person name="Clayton D.J."/>
            <person name="Windhorst D."/>
            <person name="Vernikos G."/>
            <person name="Davidson S."/>
            <person name="Churcher C."/>
            <person name="Quail M.A."/>
            <person name="Stevens M."/>
            <person name="Jones M.A."/>
            <person name="Watson M."/>
            <person name="Barron A."/>
            <person name="Layton A."/>
            <person name="Pickard D."/>
            <person name="Kingsley R.A."/>
            <person name="Bignell A."/>
            <person name="Clark L."/>
            <person name="Harris B."/>
            <person name="Ormond D."/>
            <person name="Abdellah Z."/>
            <person name="Brooks K."/>
            <person name="Cherevach I."/>
            <person name="Chillingworth T."/>
            <person name="Woodward J."/>
            <person name="Norberczak H."/>
            <person name="Lord A."/>
            <person name="Arrowsmith C."/>
            <person name="Jagels K."/>
            <person name="Moule S."/>
            <person name="Mungall K."/>
            <person name="Saunders M."/>
            <person name="Whitehead S."/>
            <person name="Chabalgoity J.A."/>
            <person name="Maskell D."/>
            <person name="Humphreys T."/>
            <person name="Roberts M."/>
            <person name="Barrow P.A."/>
            <person name="Dougan G."/>
            <person name="Parkhill J."/>
        </authorList>
    </citation>
    <scope>NUCLEOTIDE SEQUENCE [LARGE SCALE GENOMIC DNA]</scope>
    <source>
        <strain>P125109</strain>
    </source>
</reference>
<organism>
    <name type="scientific">Salmonella enteritidis PT4 (strain P125109)</name>
    <dbReference type="NCBI Taxonomy" id="550537"/>
    <lineage>
        <taxon>Bacteria</taxon>
        <taxon>Pseudomonadati</taxon>
        <taxon>Pseudomonadota</taxon>
        <taxon>Gammaproteobacteria</taxon>
        <taxon>Enterobacterales</taxon>
        <taxon>Enterobacteriaceae</taxon>
        <taxon>Salmonella</taxon>
    </lineage>
</organism>
<evidence type="ECO:0000255" key="1">
    <source>
        <dbReference type="HAMAP-Rule" id="MF_00446"/>
    </source>
</evidence>
<accession>B5R3E4</accession>
<feature type="chain" id="PRO_1000192027" description="Aspartate 1-decarboxylase beta chain" evidence="1">
    <location>
        <begin position="1"/>
        <end position="24"/>
    </location>
</feature>
<feature type="chain" id="PRO_1000192028" description="Aspartate 1-decarboxylase alpha chain" evidence="1">
    <location>
        <begin position="25"/>
        <end position="126"/>
    </location>
</feature>
<feature type="active site" description="Schiff-base intermediate with substrate; via pyruvic acid" evidence="1">
    <location>
        <position position="25"/>
    </location>
</feature>
<feature type="active site" description="Proton donor" evidence="1">
    <location>
        <position position="58"/>
    </location>
</feature>
<feature type="binding site" evidence="1">
    <location>
        <position position="57"/>
    </location>
    <ligand>
        <name>substrate</name>
    </ligand>
</feature>
<feature type="binding site" evidence="1">
    <location>
        <begin position="73"/>
        <end position="75"/>
    </location>
    <ligand>
        <name>substrate</name>
    </ligand>
</feature>
<feature type="modified residue" description="Pyruvic acid (Ser)" evidence="1">
    <location>
        <position position="25"/>
    </location>
</feature>